<gene>
    <name type="primary">ubp6</name>
    <name type="ORF">SPAC6G9.08</name>
</gene>
<reference key="1">
    <citation type="journal article" date="2002" name="Nature">
        <title>The genome sequence of Schizosaccharomyces pombe.</title>
        <authorList>
            <person name="Wood V."/>
            <person name="Gwilliam R."/>
            <person name="Rajandream M.A."/>
            <person name="Lyne M.H."/>
            <person name="Lyne R."/>
            <person name="Stewart A."/>
            <person name="Sgouros J.G."/>
            <person name="Peat N."/>
            <person name="Hayles J."/>
            <person name="Baker S.G."/>
            <person name="Basham D."/>
            <person name="Bowman S."/>
            <person name="Brooks K."/>
            <person name="Brown D."/>
            <person name="Brown S."/>
            <person name="Chillingworth T."/>
            <person name="Churcher C.M."/>
            <person name="Collins M."/>
            <person name="Connor R."/>
            <person name="Cronin A."/>
            <person name="Davis P."/>
            <person name="Feltwell T."/>
            <person name="Fraser A."/>
            <person name="Gentles S."/>
            <person name="Goble A."/>
            <person name="Hamlin N."/>
            <person name="Harris D.E."/>
            <person name="Hidalgo J."/>
            <person name="Hodgson G."/>
            <person name="Holroyd S."/>
            <person name="Hornsby T."/>
            <person name="Howarth S."/>
            <person name="Huckle E.J."/>
            <person name="Hunt S."/>
            <person name="Jagels K."/>
            <person name="James K.D."/>
            <person name="Jones L."/>
            <person name="Jones M."/>
            <person name="Leather S."/>
            <person name="McDonald S."/>
            <person name="McLean J."/>
            <person name="Mooney P."/>
            <person name="Moule S."/>
            <person name="Mungall K.L."/>
            <person name="Murphy L.D."/>
            <person name="Niblett D."/>
            <person name="Odell C."/>
            <person name="Oliver K."/>
            <person name="O'Neil S."/>
            <person name="Pearson D."/>
            <person name="Quail M.A."/>
            <person name="Rabbinowitsch E."/>
            <person name="Rutherford K.M."/>
            <person name="Rutter S."/>
            <person name="Saunders D."/>
            <person name="Seeger K."/>
            <person name="Sharp S."/>
            <person name="Skelton J."/>
            <person name="Simmonds M.N."/>
            <person name="Squares R."/>
            <person name="Squares S."/>
            <person name="Stevens K."/>
            <person name="Taylor K."/>
            <person name="Taylor R.G."/>
            <person name="Tivey A."/>
            <person name="Walsh S.V."/>
            <person name="Warren T."/>
            <person name="Whitehead S."/>
            <person name="Woodward J.R."/>
            <person name="Volckaert G."/>
            <person name="Aert R."/>
            <person name="Robben J."/>
            <person name="Grymonprez B."/>
            <person name="Weltjens I."/>
            <person name="Vanstreels E."/>
            <person name="Rieger M."/>
            <person name="Schaefer M."/>
            <person name="Mueller-Auer S."/>
            <person name="Gabel C."/>
            <person name="Fuchs M."/>
            <person name="Duesterhoeft A."/>
            <person name="Fritzc C."/>
            <person name="Holzer E."/>
            <person name="Moestl D."/>
            <person name="Hilbert H."/>
            <person name="Borzym K."/>
            <person name="Langer I."/>
            <person name="Beck A."/>
            <person name="Lehrach H."/>
            <person name="Reinhardt R."/>
            <person name="Pohl T.M."/>
            <person name="Eger P."/>
            <person name="Zimmermann W."/>
            <person name="Wedler H."/>
            <person name="Wambutt R."/>
            <person name="Purnelle B."/>
            <person name="Goffeau A."/>
            <person name="Cadieu E."/>
            <person name="Dreano S."/>
            <person name="Gloux S."/>
            <person name="Lelaure V."/>
            <person name="Mottier S."/>
            <person name="Galibert F."/>
            <person name="Aves S.J."/>
            <person name="Xiang Z."/>
            <person name="Hunt C."/>
            <person name="Moore K."/>
            <person name="Hurst S.M."/>
            <person name="Lucas M."/>
            <person name="Rochet M."/>
            <person name="Gaillardin C."/>
            <person name="Tallada V.A."/>
            <person name="Garzon A."/>
            <person name="Thode G."/>
            <person name="Daga R.R."/>
            <person name="Cruzado L."/>
            <person name="Jimenez J."/>
            <person name="Sanchez M."/>
            <person name="del Rey F."/>
            <person name="Benito J."/>
            <person name="Dominguez A."/>
            <person name="Revuelta J.L."/>
            <person name="Moreno S."/>
            <person name="Armstrong J."/>
            <person name="Forsburg S.L."/>
            <person name="Cerutti L."/>
            <person name="Lowe T."/>
            <person name="McCombie W.R."/>
            <person name="Paulsen I."/>
            <person name="Potashkin J."/>
            <person name="Shpakovski G.V."/>
            <person name="Ussery D."/>
            <person name="Barrell B.G."/>
            <person name="Nurse P."/>
        </authorList>
    </citation>
    <scope>NUCLEOTIDE SEQUENCE [LARGE SCALE GENOMIC DNA]</scope>
    <source>
        <strain>972 / ATCC 24843</strain>
    </source>
</reference>
<reference key="2">
    <citation type="journal article" date="2011" name="Science">
        <title>Comparative functional genomics of the fission yeasts.</title>
        <authorList>
            <person name="Rhind N."/>
            <person name="Chen Z."/>
            <person name="Yassour M."/>
            <person name="Thompson D.A."/>
            <person name="Haas B.J."/>
            <person name="Habib N."/>
            <person name="Wapinski I."/>
            <person name="Roy S."/>
            <person name="Lin M.F."/>
            <person name="Heiman D.I."/>
            <person name="Young S.K."/>
            <person name="Furuya K."/>
            <person name="Guo Y."/>
            <person name="Pidoux A."/>
            <person name="Chen H.M."/>
            <person name="Robbertse B."/>
            <person name="Goldberg J.M."/>
            <person name="Aoki K."/>
            <person name="Bayne E.H."/>
            <person name="Berlin A.M."/>
            <person name="Desjardins C.A."/>
            <person name="Dobbs E."/>
            <person name="Dukaj L."/>
            <person name="Fan L."/>
            <person name="FitzGerald M.G."/>
            <person name="French C."/>
            <person name="Gujja S."/>
            <person name="Hansen K."/>
            <person name="Keifenheim D."/>
            <person name="Levin J.Z."/>
            <person name="Mosher R.A."/>
            <person name="Mueller C.A."/>
            <person name="Pfiffner J."/>
            <person name="Priest M."/>
            <person name="Russ C."/>
            <person name="Smialowska A."/>
            <person name="Swoboda P."/>
            <person name="Sykes S.M."/>
            <person name="Vaughn M."/>
            <person name="Vengrova S."/>
            <person name="Yoder R."/>
            <person name="Zeng Q."/>
            <person name="Allshire R."/>
            <person name="Baulcombe D."/>
            <person name="Birren B.W."/>
            <person name="Brown W."/>
            <person name="Ekwall K."/>
            <person name="Kellis M."/>
            <person name="Leatherwood J."/>
            <person name="Levin H."/>
            <person name="Margalit H."/>
            <person name="Martienssen R."/>
            <person name="Nieduszynski C.A."/>
            <person name="Spatafora J.W."/>
            <person name="Friedman N."/>
            <person name="Dalgaard J.Z."/>
            <person name="Baumann P."/>
            <person name="Niki H."/>
            <person name="Regev A."/>
            <person name="Nusbaum C."/>
        </authorList>
    </citation>
    <scope>REVISION OF GENE MODEL</scope>
</reference>
<reference key="3">
    <citation type="journal article" date="2004" name="J. Mol. Biol.">
        <title>Uch2/Uch37 is the major deubiquitinating enzyme associated with the 26S proteasome in fission yeast.</title>
        <authorList>
            <person name="Stone M."/>
            <person name="Hartmann-Petersen R."/>
            <person name="Seeger M."/>
            <person name="Bech-Otschir D."/>
            <person name="Wallace M."/>
            <person name="Gordon C."/>
        </authorList>
    </citation>
    <scope>FUNCTION</scope>
    <scope>INTERACTION WITH RPN1</scope>
    <scope>SUBCELLULAR LOCATION</scope>
</reference>
<reference key="4">
    <citation type="journal article" date="2006" name="Nat. Biotechnol.">
        <title>ORFeome cloning and global analysis of protein localization in the fission yeast Schizosaccharomyces pombe.</title>
        <authorList>
            <person name="Matsuyama A."/>
            <person name="Arai R."/>
            <person name="Yashiroda Y."/>
            <person name="Shirai A."/>
            <person name="Kamata A."/>
            <person name="Sekido S."/>
            <person name="Kobayashi Y."/>
            <person name="Hashimoto A."/>
            <person name="Hamamoto M."/>
            <person name="Hiraoka Y."/>
            <person name="Horinouchi S."/>
            <person name="Yoshida M."/>
        </authorList>
    </citation>
    <scope>SUBCELLULAR LOCATION [LARGE SCALE ANALYSIS]</scope>
</reference>
<name>UBP6_SCHPO</name>
<sequence>MMIPIAIRWQGKKYDLEIEPNETGSTLKHQLYSLTQVPPERQKVIVKGGQLKDDVLLGSVGIKPNATLLMMGTAGELPTAMPIPAVESVEQEESEDDGYPSGLINLGNTCYMNSTVQMLRAIPELSDAVSQFNSSGGLVAEYRTLLNSMQSNAPVTPMRFLQSLRMEYPQFAEMSRETGGYAQQDAEECWSFLLSVLQRSLSSEWVQKNMAGKLLSTMKCDENEVQEQPSISHDTFLSLPCHISMHTSYMTQGILEGLTQKISKHSDVLNRDAMYSKISRISRLPNYLTVNFVRFYWKASIGKKAKILRKVKFPFELDAVEFCTPELSQKLIPVRDKLREIEKNDEEHERAAKRIKIQPSEDEKEAEAECRLTQVATCQSLVDPELADDEGANPTGLYDLVGVLSHAGASASSGHYQAWIRNSNNRAEWFRFNDAKVSIVPAEKIETLDGGGEADSAYILLYKAKDIA</sequence>
<feature type="chain" id="PRO_0000080607" description="Ubiquitin carboxyl-terminal hydrolase 6">
    <location>
        <begin position="1"/>
        <end position="468"/>
    </location>
</feature>
<feature type="domain" description="Ubiquitin-like" evidence="1">
    <location>
        <begin position="1"/>
        <end position="71"/>
    </location>
</feature>
<feature type="domain" description="USP">
    <location>
        <begin position="101"/>
        <end position="465"/>
    </location>
</feature>
<feature type="active site" description="Nucleophile" evidence="2 3">
    <location>
        <position position="110"/>
    </location>
</feature>
<feature type="active site" description="Proton acceptor" evidence="2 3">
    <location>
        <position position="415"/>
    </location>
</feature>
<organism>
    <name type="scientific">Schizosaccharomyces pombe (strain 972 / ATCC 24843)</name>
    <name type="common">Fission yeast</name>
    <dbReference type="NCBI Taxonomy" id="284812"/>
    <lineage>
        <taxon>Eukaryota</taxon>
        <taxon>Fungi</taxon>
        <taxon>Dikarya</taxon>
        <taxon>Ascomycota</taxon>
        <taxon>Taphrinomycotina</taxon>
        <taxon>Schizosaccharomycetes</taxon>
        <taxon>Schizosaccharomycetales</taxon>
        <taxon>Schizosaccharomycetaceae</taxon>
        <taxon>Schizosaccharomyces</taxon>
    </lineage>
</organism>
<comment type="function">
    <text evidence="4">Ubiquitin-protein hydrolase is involved both in the processing of ubiquitin precursors and of ubiquitinated proteins. This enzyme is a thiol protease that recognizes and hydrolyzes a peptide bond at the C-terminal glycine of ubiquitin.</text>
</comment>
<comment type="catalytic activity">
    <reaction>
        <text>Thiol-dependent hydrolysis of ester, thioester, amide, peptide and isopeptide bonds formed by the C-terminal Gly of ubiquitin (a 76-residue protein attached to proteins as an intracellular targeting signal).</text>
        <dbReference type="EC" id="3.4.19.12"/>
    </reaction>
</comment>
<comment type="subunit">
    <text evidence="4">Component of the 26S proteasome. Interacts with rpn1.</text>
</comment>
<comment type="subcellular location">
    <subcellularLocation>
        <location evidence="4 5">Nucleus</location>
    </subcellularLocation>
</comment>
<comment type="similarity">
    <text evidence="6">Belongs to the peptidase C19 family. USP14/UBP6 subfamily.</text>
</comment>
<accession>Q92353</accession>
<protein>
    <recommendedName>
        <fullName>Ubiquitin carboxyl-terminal hydrolase 6</fullName>
        <ecNumber>3.4.19.12</ecNumber>
    </recommendedName>
    <alternativeName>
        <fullName>Deubiquitinating enzyme 6</fullName>
    </alternativeName>
    <alternativeName>
        <fullName>Ubiquitin thiollesterase 6</fullName>
    </alternativeName>
    <alternativeName>
        <fullName>Ubiquitin-specific-processing protease 6</fullName>
    </alternativeName>
</protein>
<proteinExistence type="evidence at protein level"/>
<dbReference type="EC" id="3.4.19.12"/>
<dbReference type="EMBL" id="CU329670">
    <property type="protein sequence ID" value="CAB03610.2"/>
    <property type="molecule type" value="Genomic_DNA"/>
</dbReference>
<dbReference type="PIR" id="T39070">
    <property type="entry name" value="T39070"/>
</dbReference>
<dbReference type="RefSeq" id="NP_594117.2">
    <property type="nucleotide sequence ID" value="NM_001019541.2"/>
</dbReference>
<dbReference type="SMR" id="Q92353"/>
<dbReference type="BioGRID" id="278310">
    <property type="interactions" value="63"/>
</dbReference>
<dbReference type="ComplexPortal" id="CPX-9077">
    <property type="entry name" value="26S proteasome complex"/>
</dbReference>
<dbReference type="FunCoup" id="Q92353">
    <property type="interactions" value="1000"/>
</dbReference>
<dbReference type="STRING" id="284812.Q92353"/>
<dbReference type="MEROPS" id="C19.A60"/>
<dbReference type="iPTMnet" id="Q92353"/>
<dbReference type="SwissPalm" id="Q92353"/>
<dbReference type="PaxDb" id="4896-SPAC6G9.08.1"/>
<dbReference type="EnsemblFungi" id="SPAC6G9.08.1">
    <property type="protein sequence ID" value="SPAC6G9.08.1:pep"/>
    <property type="gene ID" value="SPAC6G9.08"/>
</dbReference>
<dbReference type="GeneID" id="2541819"/>
<dbReference type="KEGG" id="spo:2541819"/>
<dbReference type="PomBase" id="SPAC6G9.08">
    <property type="gene designation" value="ubp6"/>
</dbReference>
<dbReference type="VEuPathDB" id="FungiDB:SPAC6G9.08"/>
<dbReference type="eggNOG" id="KOG1872">
    <property type="taxonomic scope" value="Eukaryota"/>
</dbReference>
<dbReference type="HOGENOM" id="CLU_017549_2_1_1"/>
<dbReference type="InParanoid" id="Q92353"/>
<dbReference type="OMA" id="RKVQFPF"/>
<dbReference type="Reactome" id="R-SPO-5689880">
    <property type="pathway name" value="Ub-specific processing proteases"/>
</dbReference>
<dbReference type="PRO" id="PR:Q92353"/>
<dbReference type="Proteomes" id="UP000002485">
    <property type="component" value="Chromosome I"/>
</dbReference>
<dbReference type="GO" id="GO:0005654">
    <property type="term" value="C:nucleoplasm"/>
    <property type="evidence" value="ECO:0007005"/>
    <property type="project" value="PomBase"/>
</dbReference>
<dbReference type="GO" id="GO:0005634">
    <property type="term" value="C:nucleus"/>
    <property type="evidence" value="ECO:0007005"/>
    <property type="project" value="PomBase"/>
</dbReference>
<dbReference type="GO" id="GO:0000502">
    <property type="term" value="C:proteasome complex"/>
    <property type="evidence" value="ECO:0007669"/>
    <property type="project" value="UniProtKB-KW"/>
</dbReference>
<dbReference type="GO" id="GO:0004843">
    <property type="term" value="F:cysteine-type deubiquitinase activity"/>
    <property type="evidence" value="ECO:0000318"/>
    <property type="project" value="GO_Central"/>
</dbReference>
<dbReference type="GO" id="GO:0140492">
    <property type="term" value="F:metal-dependent deubiquitinase activity"/>
    <property type="evidence" value="ECO:0007005"/>
    <property type="project" value="PomBase"/>
</dbReference>
<dbReference type="GO" id="GO:0070628">
    <property type="term" value="F:proteasome binding"/>
    <property type="evidence" value="ECO:0000318"/>
    <property type="project" value="GO_Central"/>
</dbReference>
<dbReference type="GO" id="GO:1904293">
    <property type="term" value="P:negative regulation of ERAD pathway"/>
    <property type="evidence" value="ECO:0000318"/>
    <property type="project" value="GO_Central"/>
</dbReference>
<dbReference type="GO" id="GO:0043161">
    <property type="term" value="P:proteasome-mediated ubiquitin-dependent protein catabolic process"/>
    <property type="evidence" value="ECO:0000305"/>
    <property type="project" value="PomBase"/>
</dbReference>
<dbReference type="GO" id="GO:0016579">
    <property type="term" value="P:protein deubiquitination"/>
    <property type="evidence" value="ECO:0007669"/>
    <property type="project" value="InterPro"/>
</dbReference>
<dbReference type="CDD" id="cd02657">
    <property type="entry name" value="Peptidase_C19A"/>
    <property type="match status" value="1"/>
</dbReference>
<dbReference type="CDD" id="cd16104">
    <property type="entry name" value="Ubl_USP14_like"/>
    <property type="match status" value="1"/>
</dbReference>
<dbReference type="Gene3D" id="6.10.140.1140">
    <property type="match status" value="1"/>
</dbReference>
<dbReference type="Gene3D" id="3.90.70.10">
    <property type="entry name" value="Cysteine proteinases"/>
    <property type="match status" value="1"/>
</dbReference>
<dbReference type="Gene3D" id="3.10.20.90">
    <property type="entry name" value="Phosphatidylinositol 3-kinase Catalytic Subunit, Chain A, domain 1"/>
    <property type="match status" value="1"/>
</dbReference>
<dbReference type="InterPro" id="IPR038765">
    <property type="entry name" value="Papain-like_cys_pep_sf"/>
</dbReference>
<dbReference type="InterPro" id="IPR001394">
    <property type="entry name" value="Peptidase_C19_UCH"/>
</dbReference>
<dbReference type="InterPro" id="IPR000626">
    <property type="entry name" value="Ubiquitin-like_dom"/>
</dbReference>
<dbReference type="InterPro" id="IPR029071">
    <property type="entry name" value="Ubiquitin-like_domsf"/>
</dbReference>
<dbReference type="InterPro" id="IPR019954">
    <property type="entry name" value="Ubiquitin_CS"/>
</dbReference>
<dbReference type="InterPro" id="IPR044635">
    <property type="entry name" value="UBP14-like"/>
</dbReference>
<dbReference type="InterPro" id="IPR018200">
    <property type="entry name" value="USP_CS"/>
</dbReference>
<dbReference type="InterPro" id="IPR028889">
    <property type="entry name" value="USP_dom"/>
</dbReference>
<dbReference type="PANTHER" id="PTHR43982">
    <property type="entry name" value="UBIQUITIN CARBOXYL-TERMINAL HYDROLASE"/>
    <property type="match status" value="1"/>
</dbReference>
<dbReference type="PANTHER" id="PTHR43982:SF1">
    <property type="entry name" value="UBIQUITIN CARBOXYL-TERMINAL HYDROLASE 14"/>
    <property type="match status" value="1"/>
</dbReference>
<dbReference type="Pfam" id="PF00240">
    <property type="entry name" value="ubiquitin"/>
    <property type="match status" value="1"/>
</dbReference>
<dbReference type="Pfam" id="PF00443">
    <property type="entry name" value="UCH"/>
    <property type="match status" value="1"/>
</dbReference>
<dbReference type="SMART" id="SM00213">
    <property type="entry name" value="UBQ"/>
    <property type="match status" value="1"/>
</dbReference>
<dbReference type="SUPFAM" id="SSF54001">
    <property type="entry name" value="Cysteine proteinases"/>
    <property type="match status" value="1"/>
</dbReference>
<dbReference type="SUPFAM" id="SSF54236">
    <property type="entry name" value="Ubiquitin-like"/>
    <property type="match status" value="1"/>
</dbReference>
<dbReference type="PROSITE" id="PS00299">
    <property type="entry name" value="UBIQUITIN_1"/>
    <property type="match status" value="1"/>
</dbReference>
<dbReference type="PROSITE" id="PS50053">
    <property type="entry name" value="UBIQUITIN_2"/>
    <property type="match status" value="1"/>
</dbReference>
<dbReference type="PROSITE" id="PS00972">
    <property type="entry name" value="USP_1"/>
    <property type="match status" value="1"/>
</dbReference>
<dbReference type="PROSITE" id="PS00973">
    <property type="entry name" value="USP_2"/>
    <property type="match status" value="1"/>
</dbReference>
<dbReference type="PROSITE" id="PS50235">
    <property type="entry name" value="USP_3"/>
    <property type="match status" value="1"/>
</dbReference>
<evidence type="ECO:0000255" key="1">
    <source>
        <dbReference type="PROSITE-ProRule" id="PRU00214"/>
    </source>
</evidence>
<evidence type="ECO:0000255" key="2">
    <source>
        <dbReference type="PROSITE-ProRule" id="PRU10092"/>
    </source>
</evidence>
<evidence type="ECO:0000255" key="3">
    <source>
        <dbReference type="PROSITE-ProRule" id="PRU10093"/>
    </source>
</evidence>
<evidence type="ECO:0000269" key="4">
    <source>
    </source>
</evidence>
<evidence type="ECO:0000269" key="5">
    <source>
    </source>
</evidence>
<evidence type="ECO:0000305" key="6"/>
<keyword id="KW-0378">Hydrolase</keyword>
<keyword id="KW-0539">Nucleus</keyword>
<keyword id="KW-0645">Protease</keyword>
<keyword id="KW-0647">Proteasome</keyword>
<keyword id="KW-1185">Reference proteome</keyword>
<keyword id="KW-0788">Thiol protease</keyword>
<keyword id="KW-0833">Ubl conjugation pathway</keyword>